<gene>
    <name evidence="1" type="primary">psb30</name>
    <name evidence="1" type="synonym">ycf12</name>
</gene>
<dbReference type="EMBL" id="AF241276">
    <property type="protein sequence ID" value="AAF82440.1"/>
    <property type="molecule type" value="Genomic_DNA"/>
</dbReference>
<dbReference type="SMR" id="Q9MS78"/>
<dbReference type="GO" id="GO:0009535">
    <property type="term" value="C:chloroplast thylakoid membrane"/>
    <property type="evidence" value="ECO:0007669"/>
    <property type="project" value="UniProtKB-SubCell"/>
</dbReference>
<dbReference type="GO" id="GO:0009523">
    <property type="term" value="C:photosystem II"/>
    <property type="evidence" value="ECO:0007669"/>
    <property type="project" value="UniProtKB-KW"/>
</dbReference>
<dbReference type="GO" id="GO:0015979">
    <property type="term" value="P:photosynthesis"/>
    <property type="evidence" value="ECO:0007669"/>
    <property type="project" value="UniProtKB-KW"/>
</dbReference>
<dbReference type="InterPro" id="IPR010284">
    <property type="entry name" value="PSII_Ycf12_core-subunit"/>
</dbReference>
<dbReference type="NCBIfam" id="NF010239">
    <property type="entry name" value="PRK13686.1"/>
    <property type="match status" value="1"/>
</dbReference>
<dbReference type="Pfam" id="PF05969">
    <property type="entry name" value="PSII_Ycf12"/>
    <property type="match status" value="1"/>
</dbReference>
<accession>Q9MS78</accession>
<protein>
    <recommendedName>
        <fullName evidence="1">Photosystem II reaction center protein Psb30</fullName>
    </recommendedName>
    <alternativeName>
        <fullName evidence="1">Photosystem II reaction center protein Ycf12</fullName>
    </alternativeName>
</protein>
<geneLocation type="chloroplast"/>
<evidence type="ECO:0000255" key="1">
    <source>
        <dbReference type="HAMAP-Rule" id="MF_01329"/>
    </source>
</evidence>
<name>PSB30_PHAAC</name>
<keyword id="KW-0150">Chloroplast</keyword>
<keyword id="KW-0472">Membrane</keyword>
<keyword id="KW-0602">Photosynthesis</keyword>
<keyword id="KW-0604">Photosystem II</keyword>
<keyword id="KW-0934">Plastid</keyword>
<keyword id="KW-0793">Thylakoid</keyword>
<keyword id="KW-0812">Transmembrane</keyword>
<keyword id="KW-1133">Transmembrane helix</keyword>
<feature type="chain" id="PRO_0000059035" description="Photosystem II reaction center protein Psb30">
    <location>
        <begin position="1"/>
        <end position="31"/>
    </location>
</feature>
<feature type="transmembrane region" description="Helical" evidence="1">
    <location>
        <begin position="5"/>
        <end position="25"/>
    </location>
</feature>
<reference key="1">
    <citation type="journal article" date="2001" name="Mol. Gen. Genet.">
        <title>Comparison of psbK operon organization and group III intron content in chloroplast genomes of 12 Euglenoid species.</title>
        <authorList>
            <person name="Doetsch N.A."/>
            <person name="Thompson M.D."/>
            <person name="Favreau M.R."/>
            <person name="Hallick R.B."/>
        </authorList>
    </citation>
    <scope>NUCLEOTIDE SEQUENCE [GENOMIC DNA]</scope>
    <source>
        <strain>UTEX LB 1288</strain>
    </source>
</reference>
<organism>
    <name type="scientific">Phacus acuminatus</name>
    <dbReference type="NCBI Taxonomy" id="130316"/>
    <lineage>
        <taxon>Eukaryota</taxon>
        <taxon>Discoba</taxon>
        <taxon>Euglenozoa</taxon>
        <taxon>Euglenida</taxon>
        <taxon>Spirocuta</taxon>
        <taxon>Euglenophyceae</taxon>
        <taxon>Euglenales</taxon>
        <taxon>Phacaceae</taxon>
        <taxon>Phacus</taxon>
    </lineage>
</organism>
<proteinExistence type="inferred from homology"/>
<sequence>MELLIQLTSLLLIVIAGPLVIALLFLKQGNL</sequence>
<comment type="function">
    <text evidence="1">A core subunit of photosystem II (PSII), probably helps stabilize the reaction center.</text>
</comment>
<comment type="subunit">
    <text evidence="1">PSII is composed of 1 copy each of membrane proteins PsbA, PsbB, PsbC, PsbD, PsbE, PsbF, PsbH, PsbI, PsbJ, PsbK, PsbL, PsbM, PsbT, PsbX, PsbY, PsbZ, Psb30/Ycf12, peripheral proteins of the oxygen-evolving complex and a large number of cofactors. It forms dimeric complexes.</text>
</comment>
<comment type="subcellular location">
    <subcellularLocation>
        <location evidence="1">Plastid</location>
        <location evidence="1">Chloroplast thylakoid membrane</location>
        <topology evidence="1">Single-pass membrane protein</topology>
    </subcellularLocation>
</comment>
<comment type="similarity">
    <text evidence="1">Belongs to the Psb30/Ycf12 family.</text>
</comment>